<reference key="1">
    <citation type="journal article" date="1992" name="J. Gen. Virol.">
        <title>The myxoma virus thymidine kinase gene: sequence and transcriptional mapping.</title>
        <authorList>
            <person name="Jackson R.J."/>
            <person name="Bults H.G."/>
        </authorList>
    </citation>
    <scope>NUCLEOTIDE SEQUENCE [GENOMIC DNA]</scope>
</reference>
<keyword id="KW-0067">ATP-binding</keyword>
<keyword id="KW-0237">DNA synthesis</keyword>
<keyword id="KW-0418">Kinase</keyword>
<keyword id="KW-0479">Metal-binding</keyword>
<keyword id="KW-0547">Nucleotide-binding</keyword>
<keyword id="KW-0808">Transferase</keyword>
<keyword id="KW-0862">Zinc</keyword>
<comment type="catalytic activity">
    <reaction>
        <text>thymidine + ATP = dTMP + ADP + H(+)</text>
        <dbReference type="Rhea" id="RHEA:19129"/>
        <dbReference type="ChEBI" id="CHEBI:15378"/>
        <dbReference type="ChEBI" id="CHEBI:17748"/>
        <dbReference type="ChEBI" id="CHEBI:30616"/>
        <dbReference type="ChEBI" id="CHEBI:63528"/>
        <dbReference type="ChEBI" id="CHEBI:456216"/>
        <dbReference type="EC" id="2.7.1.21"/>
    </reaction>
</comment>
<comment type="similarity">
    <text evidence="3">Belongs to the thymidine kinase family.</text>
</comment>
<accession>P28851</accession>
<feature type="chain" id="PRO_0000174933" description="Thymidine kinase">
    <location>
        <begin position="1"/>
        <end position="178"/>
    </location>
</feature>
<feature type="active site" description="Proton acceptor" evidence="2">
    <location>
        <position position="85"/>
    </location>
</feature>
<feature type="binding site" evidence="1">
    <location>
        <begin position="13"/>
        <end position="20"/>
    </location>
    <ligand>
        <name>ATP</name>
        <dbReference type="ChEBI" id="CHEBI:30616"/>
    </ligand>
</feature>
<feature type="binding site" evidence="1">
    <location>
        <position position="115"/>
    </location>
    <ligand>
        <name>substrate</name>
    </ligand>
</feature>
<feature type="binding site" evidence="1">
    <location>
        <position position="140"/>
    </location>
    <ligand>
        <name>Zn(2+)</name>
        <dbReference type="ChEBI" id="CHEBI:29105"/>
    </ligand>
</feature>
<feature type="binding site" evidence="1">
    <location>
        <position position="143"/>
    </location>
    <ligand>
        <name>Zn(2+)</name>
        <dbReference type="ChEBI" id="CHEBI:29105"/>
    </ligand>
</feature>
<feature type="binding site" evidence="1">
    <location>
        <begin position="159"/>
        <end position="163"/>
    </location>
    <ligand>
        <name>substrate</name>
    </ligand>
</feature>
<feature type="binding site" evidence="1">
    <location>
        <position position="172"/>
    </location>
    <ligand>
        <name>Zn(2+)</name>
        <dbReference type="ChEBI" id="CHEBI:29105"/>
    </ligand>
</feature>
<feature type="binding site" evidence="1">
    <location>
        <position position="175"/>
    </location>
    <ligand>
        <name>Zn(2+)</name>
        <dbReference type="ChEBI" id="CHEBI:29105"/>
    </ligand>
</feature>
<name>KITH_MYXVU</name>
<sequence length="178" mass="19931">MAMYGGQIHLIIGPMFAGKSTELIRLVKRYQIARYKCLVVNYEKDARYGNGVRTHDNTCISAVPTASLDDVESISEHVEVIGIDEGQFFPNIVSFCERMANAGKVLIVAALDGTFQRKPFTNICELIPLAENVTKLNAVCMYCYKDASFSKRLGNETEIEIIGGSDKYKSVCRKCYFF</sequence>
<organism>
    <name type="scientific">Myxoma virus (strain Uriarra)</name>
    <name type="common">MYXV</name>
    <dbReference type="NCBI Taxonomy" id="265876"/>
    <lineage>
        <taxon>Viruses</taxon>
        <taxon>Varidnaviria</taxon>
        <taxon>Bamfordvirae</taxon>
        <taxon>Nucleocytoviricota</taxon>
        <taxon>Pokkesviricetes</taxon>
        <taxon>Chitovirales</taxon>
        <taxon>Poxviridae</taxon>
        <taxon>Chordopoxvirinae</taxon>
        <taxon>Leporipoxvirus</taxon>
        <taxon>Myxoma virus</taxon>
    </lineage>
</organism>
<protein>
    <recommendedName>
        <fullName>Thymidine kinase</fullName>
        <ecNumber>2.7.1.21</ecNumber>
    </recommendedName>
</protein>
<dbReference type="EC" id="2.7.1.21"/>
<dbReference type="EMBL" id="X52655">
    <property type="protein sequence ID" value="CAA36880.1"/>
    <property type="molecule type" value="Genomic_DNA"/>
</dbReference>
<dbReference type="PIR" id="JQ1421">
    <property type="entry name" value="KIVZM1"/>
</dbReference>
<dbReference type="SMR" id="P28851"/>
<dbReference type="GO" id="GO:0005524">
    <property type="term" value="F:ATP binding"/>
    <property type="evidence" value="ECO:0007669"/>
    <property type="project" value="UniProtKB-KW"/>
</dbReference>
<dbReference type="GO" id="GO:0046872">
    <property type="term" value="F:metal ion binding"/>
    <property type="evidence" value="ECO:0007669"/>
    <property type="project" value="UniProtKB-KW"/>
</dbReference>
<dbReference type="GO" id="GO:0004797">
    <property type="term" value="F:thymidine kinase activity"/>
    <property type="evidence" value="ECO:0007669"/>
    <property type="project" value="UniProtKB-EC"/>
</dbReference>
<dbReference type="GO" id="GO:0071897">
    <property type="term" value="P:DNA biosynthetic process"/>
    <property type="evidence" value="ECO:0007669"/>
    <property type="project" value="UniProtKB-KW"/>
</dbReference>
<dbReference type="GO" id="GO:0046104">
    <property type="term" value="P:thymidine metabolic process"/>
    <property type="evidence" value="ECO:0007669"/>
    <property type="project" value="TreeGrafter"/>
</dbReference>
<dbReference type="FunFam" id="3.30.60.20:FF:000028">
    <property type="entry name" value="Thymidine kinase"/>
    <property type="match status" value="1"/>
</dbReference>
<dbReference type="FunFam" id="3.40.50.300:FF:001270">
    <property type="entry name" value="Thymidine kinase"/>
    <property type="match status" value="1"/>
</dbReference>
<dbReference type="Gene3D" id="3.30.60.20">
    <property type="match status" value="1"/>
</dbReference>
<dbReference type="Gene3D" id="3.40.50.300">
    <property type="entry name" value="P-loop containing nucleotide triphosphate hydrolases"/>
    <property type="match status" value="1"/>
</dbReference>
<dbReference type="InterPro" id="IPR027417">
    <property type="entry name" value="P-loop_NTPase"/>
</dbReference>
<dbReference type="InterPro" id="IPR001267">
    <property type="entry name" value="Thymidine_kinase"/>
</dbReference>
<dbReference type="InterPro" id="IPR020633">
    <property type="entry name" value="Thymidine_kinase_CS"/>
</dbReference>
<dbReference type="PANTHER" id="PTHR11441">
    <property type="entry name" value="THYMIDINE KINASE"/>
    <property type="match status" value="1"/>
</dbReference>
<dbReference type="PANTHER" id="PTHR11441:SF0">
    <property type="entry name" value="THYMIDINE KINASE, CYTOSOLIC"/>
    <property type="match status" value="1"/>
</dbReference>
<dbReference type="Pfam" id="PF00265">
    <property type="entry name" value="TK"/>
    <property type="match status" value="1"/>
</dbReference>
<dbReference type="PIRSF" id="PIRSF035805">
    <property type="entry name" value="TK_cell"/>
    <property type="match status" value="1"/>
</dbReference>
<dbReference type="SUPFAM" id="SSF57716">
    <property type="entry name" value="Glucocorticoid receptor-like (DNA-binding domain)"/>
    <property type="match status" value="1"/>
</dbReference>
<dbReference type="SUPFAM" id="SSF52540">
    <property type="entry name" value="P-loop containing nucleoside triphosphate hydrolases"/>
    <property type="match status" value="1"/>
</dbReference>
<dbReference type="PROSITE" id="PS00603">
    <property type="entry name" value="TK_CELLULAR_TYPE"/>
    <property type="match status" value="1"/>
</dbReference>
<gene>
    <name type="primary">TK</name>
    <name type="ORF">MVF8</name>
</gene>
<evidence type="ECO:0000250" key="1"/>
<evidence type="ECO:0000255" key="2"/>
<evidence type="ECO:0000305" key="3"/>
<proteinExistence type="inferred from homology"/>
<organismHost>
    <name type="scientific">Oryctolagus cuniculus</name>
    <name type="common">Rabbit</name>
    <dbReference type="NCBI Taxonomy" id="9986"/>
</organismHost>